<comment type="function">
    <text evidence="1">Catalyzes the ATP-dependent amination of UTP to CTP with either L-glutamine or ammonia as the source of nitrogen. Regulates intracellular CTP levels through interactions with the four ribonucleotide triphosphates.</text>
</comment>
<comment type="catalytic activity">
    <reaction evidence="1">
        <text>UTP + L-glutamine + ATP + H2O = CTP + L-glutamate + ADP + phosphate + 2 H(+)</text>
        <dbReference type="Rhea" id="RHEA:26426"/>
        <dbReference type="ChEBI" id="CHEBI:15377"/>
        <dbReference type="ChEBI" id="CHEBI:15378"/>
        <dbReference type="ChEBI" id="CHEBI:29985"/>
        <dbReference type="ChEBI" id="CHEBI:30616"/>
        <dbReference type="ChEBI" id="CHEBI:37563"/>
        <dbReference type="ChEBI" id="CHEBI:43474"/>
        <dbReference type="ChEBI" id="CHEBI:46398"/>
        <dbReference type="ChEBI" id="CHEBI:58359"/>
        <dbReference type="ChEBI" id="CHEBI:456216"/>
        <dbReference type="EC" id="6.3.4.2"/>
    </reaction>
</comment>
<comment type="catalytic activity">
    <reaction evidence="1">
        <text>L-glutamine + H2O = L-glutamate + NH4(+)</text>
        <dbReference type="Rhea" id="RHEA:15889"/>
        <dbReference type="ChEBI" id="CHEBI:15377"/>
        <dbReference type="ChEBI" id="CHEBI:28938"/>
        <dbReference type="ChEBI" id="CHEBI:29985"/>
        <dbReference type="ChEBI" id="CHEBI:58359"/>
    </reaction>
</comment>
<comment type="catalytic activity">
    <reaction evidence="1">
        <text>UTP + NH4(+) + ATP = CTP + ADP + phosphate + 2 H(+)</text>
        <dbReference type="Rhea" id="RHEA:16597"/>
        <dbReference type="ChEBI" id="CHEBI:15378"/>
        <dbReference type="ChEBI" id="CHEBI:28938"/>
        <dbReference type="ChEBI" id="CHEBI:30616"/>
        <dbReference type="ChEBI" id="CHEBI:37563"/>
        <dbReference type="ChEBI" id="CHEBI:43474"/>
        <dbReference type="ChEBI" id="CHEBI:46398"/>
        <dbReference type="ChEBI" id="CHEBI:456216"/>
    </reaction>
</comment>
<comment type="activity regulation">
    <text evidence="1">Allosterically activated by GTP, when glutamine is the substrate; GTP has no effect on the reaction when ammonia is the substrate. The allosteric effector GTP functions by stabilizing the protein conformation that binds the tetrahedral intermediate(s) formed during glutamine hydrolysis. Inhibited by the product CTP, via allosteric rather than competitive inhibition.</text>
</comment>
<comment type="pathway">
    <text evidence="1">Pyrimidine metabolism; CTP biosynthesis via de novo pathway; CTP from UDP: step 2/2.</text>
</comment>
<comment type="subunit">
    <text evidence="1">Homotetramer.</text>
</comment>
<comment type="miscellaneous">
    <text evidence="1">CTPSs have evolved a hybrid strategy for distinguishing between UTP and CTP. The overlapping regions of the product feedback inhibitory and substrate sites recognize a common feature in both compounds, the triphosphate moiety. To differentiate isosteric substrate and product pyrimidine rings, an additional pocket far from the expected kinase/ligase catalytic site, specifically recognizes the cytosine and ribose portions of the product inhibitor.</text>
</comment>
<comment type="similarity">
    <text evidence="1">Belongs to the CTP synthase family.</text>
</comment>
<dbReference type="EC" id="6.3.4.2" evidence="1"/>
<dbReference type="EMBL" id="FM178379">
    <property type="protein sequence ID" value="CAQ80199.1"/>
    <property type="molecule type" value="Genomic_DNA"/>
</dbReference>
<dbReference type="RefSeq" id="WP_012550987.1">
    <property type="nucleotide sequence ID" value="NC_011312.1"/>
</dbReference>
<dbReference type="SMR" id="B6EKL9"/>
<dbReference type="MEROPS" id="C26.964"/>
<dbReference type="KEGG" id="vsa:VSAL_I2515"/>
<dbReference type="eggNOG" id="COG0504">
    <property type="taxonomic scope" value="Bacteria"/>
</dbReference>
<dbReference type="HOGENOM" id="CLU_011675_5_0_6"/>
<dbReference type="UniPathway" id="UPA00159">
    <property type="reaction ID" value="UER00277"/>
</dbReference>
<dbReference type="Proteomes" id="UP000001730">
    <property type="component" value="Chromosome 1"/>
</dbReference>
<dbReference type="GO" id="GO:0005829">
    <property type="term" value="C:cytosol"/>
    <property type="evidence" value="ECO:0007669"/>
    <property type="project" value="TreeGrafter"/>
</dbReference>
<dbReference type="GO" id="GO:0005524">
    <property type="term" value="F:ATP binding"/>
    <property type="evidence" value="ECO:0007669"/>
    <property type="project" value="UniProtKB-KW"/>
</dbReference>
<dbReference type="GO" id="GO:0003883">
    <property type="term" value="F:CTP synthase activity"/>
    <property type="evidence" value="ECO:0007669"/>
    <property type="project" value="UniProtKB-UniRule"/>
</dbReference>
<dbReference type="GO" id="GO:0004359">
    <property type="term" value="F:glutaminase activity"/>
    <property type="evidence" value="ECO:0007669"/>
    <property type="project" value="RHEA"/>
</dbReference>
<dbReference type="GO" id="GO:0042802">
    <property type="term" value="F:identical protein binding"/>
    <property type="evidence" value="ECO:0007669"/>
    <property type="project" value="TreeGrafter"/>
</dbReference>
<dbReference type="GO" id="GO:0046872">
    <property type="term" value="F:metal ion binding"/>
    <property type="evidence" value="ECO:0007669"/>
    <property type="project" value="UniProtKB-KW"/>
</dbReference>
<dbReference type="GO" id="GO:0044210">
    <property type="term" value="P:'de novo' CTP biosynthetic process"/>
    <property type="evidence" value="ECO:0007669"/>
    <property type="project" value="UniProtKB-UniRule"/>
</dbReference>
<dbReference type="GO" id="GO:0019856">
    <property type="term" value="P:pyrimidine nucleobase biosynthetic process"/>
    <property type="evidence" value="ECO:0007669"/>
    <property type="project" value="TreeGrafter"/>
</dbReference>
<dbReference type="CDD" id="cd03113">
    <property type="entry name" value="CTPS_N"/>
    <property type="match status" value="1"/>
</dbReference>
<dbReference type="CDD" id="cd01746">
    <property type="entry name" value="GATase1_CTP_Synthase"/>
    <property type="match status" value="1"/>
</dbReference>
<dbReference type="FunFam" id="3.40.50.300:FF:000009">
    <property type="entry name" value="CTP synthase"/>
    <property type="match status" value="1"/>
</dbReference>
<dbReference type="FunFam" id="3.40.50.880:FF:000002">
    <property type="entry name" value="CTP synthase"/>
    <property type="match status" value="1"/>
</dbReference>
<dbReference type="Gene3D" id="3.40.50.880">
    <property type="match status" value="1"/>
</dbReference>
<dbReference type="Gene3D" id="3.40.50.300">
    <property type="entry name" value="P-loop containing nucleotide triphosphate hydrolases"/>
    <property type="match status" value="1"/>
</dbReference>
<dbReference type="HAMAP" id="MF_01227">
    <property type="entry name" value="PyrG"/>
    <property type="match status" value="1"/>
</dbReference>
<dbReference type="InterPro" id="IPR029062">
    <property type="entry name" value="Class_I_gatase-like"/>
</dbReference>
<dbReference type="InterPro" id="IPR004468">
    <property type="entry name" value="CTP_synthase"/>
</dbReference>
<dbReference type="InterPro" id="IPR017456">
    <property type="entry name" value="CTP_synthase_N"/>
</dbReference>
<dbReference type="InterPro" id="IPR017926">
    <property type="entry name" value="GATASE"/>
</dbReference>
<dbReference type="InterPro" id="IPR033828">
    <property type="entry name" value="GATase1_CTP_Synthase"/>
</dbReference>
<dbReference type="InterPro" id="IPR027417">
    <property type="entry name" value="P-loop_NTPase"/>
</dbReference>
<dbReference type="NCBIfam" id="NF003792">
    <property type="entry name" value="PRK05380.1"/>
    <property type="match status" value="1"/>
</dbReference>
<dbReference type="NCBIfam" id="TIGR00337">
    <property type="entry name" value="PyrG"/>
    <property type="match status" value="1"/>
</dbReference>
<dbReference type="PANTHER" id="PTHR11550">
    <property type="entry name" value="CTP SYNTHASE"/>
    <property type="match status" value="1"/>
</dbReference>
<dbReference type="PANTHER" id="PTHR11550:SF0">
    <property type="entry name" value="CTP SYNTHASE-RELATED"/>
    <property type="match status" value="1"/>
</dbReference>
<dbReference type="Pfam" id="PF06418">
    <property type="entry name" value="CTP_synth_N"/>
    <property type="match status" value="1"/>
</dbReference>
<dbReference type="Pfam" id="PF00117">
    <property type="entry name" value="GATase"/>
    <property type="match status" value="1"/>
</dbReference>
<dbReference type="SUPFAM" id="SSF52317">
    <property type="entry name" value="Class I glutamine amidotransferase-like"/>
    <property type="match status" value="1"/>
</dbReference>
<dbReference type="SUPFAM" id="SSF52540">
    <property type="entry name" value="P-loop containing nucleoside triphosphate hydrolases"/>
    <property type="match status" value="1"/>
</dbReference>
<dbReference type="PROSITE" id="PS51273">
    <property type="entry name" value="GATASE_TYPE_1"/>
    <property type="match status" value="1"/>
</dbReference>
<feature type="chain" id="PRO_1000139372" description="CTP synthase">
    <location>
        <begin position="1"/>
        <end position="546"/>
    </location>
</feature>
<feature type="domain" description="Glutamine amidotransferase type-1" evidence="1">
    <location>
        <begin position="291"/>
        <end position="542"/>
    </location>
</feature>
<feature type="region of interest" description="Amidoligase domain" evidence="1">
    <location>
        <begin position="1"/>
        <end position="266"/>
    </location>
</feature>
<feature type="active site" description="Nucleophile; for glutamine hydrolysis" evidence="1">
    <location>
        <position position="379"/>
    </location>
</feature>
<feature type="active site" evidence="1">
    <location>
        <position position="515"/>
    </location>
</feature>
<feature type="active site" evidence="1">
    <location>
        <position position="517"/>
    </location>
</feature>
<feature type="binding site" evidence="1">
    <location>
        <position position="14"/>
    </location>
    <ligand>
        <name>CTP</name>
        <dbReference type="ChEBI" id="CHEBI:37563"/>
        <note>allosteric inhibitor</note>
    </ligand>
</feature>
<feature type="binding site" evidence="1">
    <location>
        <position position="14"/>
    </location>
    <ligand>
        <name>UTP</name>
        <dbReference type="ChEBI" id="CHEBI:46398"/>
    </ligand>
</feature>
<feature type="binding site" evidence="1">
    <location>
        <begin position="15"/>
        <end position="20"/>
    </location>
    <ligand>
        <name>ATP</name>
        <dbReference type="ChEBI" id="CHEBI:30616"/>
    </ligand>
</feature>
<feature type="binding site" evidence="1">
    <location>
        <position position="72"/>
    </location>
    <ligand>
        <name>ATP</name>
        <dbReference type="ChEBI" id="CHEBI:30616"/>
    </ligand>
</feature>
<feature type="binding site" evidence="1">
    <location>
        <position position="72"/>
    </location>
    <ligand>
        <name>Mg(2+)</name>
        <dbReference type="ChEBI" id="CHEBI:18420"/>
    </ligand>
</feature>
<feature type="binding site" evidence="1">
    <location>
        <position position="140"/>
    </location>
    <ligand>
        <name>Mg(2+)</name>
        <dbReference type="ChEBI" id="CHEBI:18420"/>
    </ligand>
</feature>
<feature type="binding site" evidence="1">
    <location>
        <begin position="147"/>
        <end position="149"/>
    </location>
    <ligand>
        <name>CTP</name>
        <dbReference type="ChEBI" id="CHEBI:37563"/>
        <note>allosteric inhibitor</note>
    </ligand>
</feature>
<feature type="binding site" evidence="1">
    <location>
        <begin position="187"/>
        <end position="192"/>
    </location>
    <ligand>
        <name>CTP</name>
        <dbReference type="ChEBI" id="CHEBI:37563"/>
        <note>allosteric inhibitor</note>
    </ligand>
</feature>
<feature type="binding site" evidence="1">
    <location>
        <begin position="187"/>
        <end position="192"/>
    </location>
    <ligand>
        <name>UTP</name>
        <dbReference type="ChEBI" id="CHEBI:46398"/>
    </ligand>
</feature>
<feature type="binding site" evidence="1">
    <location>
        <position position="223"/>
    </location>
    <ligand>
        <name>CTP</name>
        <dbReference type="ChEBI" id="CHEBI:37563"/>
        <note>allosteric inhibitor</note>
    </ligand>
</feature>
<feature type="binding site" evidence="1">
    <location>
        <position position="223"/>
    </location>
    <ligand>
        <name>UTP</name>
        <dbReference type="ChEBI" id="CHEBI:46398"/>
    </ligand>
</feature>
<feature type="binding site" evidence="1">
    <location>
        <begin position="239"/>
        <end position="241"/>
    </location>
    <ligand>
        <name>ATP</name>
        <dbReference type="ChEBI" id="CHEBI:30616"/>
    </ligand>
</feature>
<feature type="binding site" evidence="1">
    <location>
        <position position="352"/>
    </location>
    <ligand>
        <name>L-glutamine</name>
        <dbReference type="ChEBI" id="CHEBI:58359"/>
    </ligand>
</feature>
<feature type="binding site" evidence="1">
    <location>
        <begin position="380"/>
        <end position="383"/>
    </location>
    <ligand>
        <name>L-glutamine</name>
        <dbReference type="ChEBI" id="CHEBI:58359"/>
    </ligand>
</feature>
<feature type="binding site" evidence="1">
    <location>
        <position position="403"/>
    </location>
    <ligand>
        <name>L-glutamine</name>
        <dbReference type="ChEBI" id="CHEBI:58359"/>
    </ligand>
</feature>
<feature type="binding site" evidence="1">
    <location>
        <position position="470"/>
    </location>
    <ligand>
        <name>L-glutamine</name>
        <dbReference type="ChEBI" id="CHEBI:58359"/>
    </ligand>
</feature>
<accession>B6EKL9</accession>
<protein>
    <recommendedName>
        <fullName evidence="1">CTP synthase</fullName>
        <ecNumber evidence="1">6.3.4.2</ecNumber>
    </recommendedName>
    <alternativeName>
        <fullName evidence="1">Cytidine 5'-triphosphate synthase</fullName>
    </alternativeName>
    <alternativeName>
        <fullName evidence="1">Cytidine triphosphate synthetase</fullName>
        <shortName evidence="1">CTP synthetase</shortName>
        <shortName evidence="1">CTPS</shortName>
    </alternativeName>
    <alternativeName>
        <fullName evidence="1">UTP--ammonia ligase</fullName>
    </alternativeName>
</protein>
<sequence>MTTNYIFVTGGVVSSLGKGIAAASLAAILEARGLKVTMMKLDPYINVDPGTMSPTQHGEVFVTEDGAETDLDLGHYERFIRTKMTKRNNFTAGRVYADVLRKERRGDYLGATIQVIPHITNAIKERVISGAAGHDIALVEVGGTVGDIESLPFMEAIRQLAVELGREHTMFMHLTLVPYLVAAGELKTKPTQHSVKELLSIGIQPDILVCRSDRVIPANERKKIALFCNVQEKAVISMKDVDSIYKIPQLIRAQGTDDLVCQRFGITAPAADLSEWEQVIYEEANPTGEVTIGMVGKYIELPDAYKSVNEALKHAGLKNRLSVTIKYIDSQDVESKGTEILEGLDAILVPGGFGDRGIEGKILAAQYARENAVPYLGICLGMQVALIDYARNVANMEGAHSSEFSKDTKFPVVGLITEWIDGDGNVEERTEKSDLGGTMRLGSQLCHLAKGSKARELYGNATVEERHRHRYEVNNNLLPQLEKAGLKISGLSADKKLVEIIEIPNHPWFVAAQFHPEFTSTPRDGHPLFEGFVKAAGENARGEFEK</sequence>
<name>PYRG_ALISL</name>
<keyword id="KW-0067">ATP-binding</keyword>
<keyword id="KW-0315">Glutamine amidotransferase</keyword>
<keyword id="KW-0436">Ligase</keyword>
<keyword id="KW-0460">Magnesium</keyword>
<keyword id="KW-0479">Metal-binding</keyword>
<keyword id="KW-0547">Nucleotide-binding</keyword>
<keyword id="KW-0665">Pyrimidine biosynthesis</keyword>
<proteinExistence type="inferred from homology"/>
<gene>
    <name evidence="1" type="primary">pyrG</name>
    <name type="ordered locus">VSAL_I2515</name>
</gene>
<organism>
    <name type="scientific">Aliivibrio salmonicida (strain LFI1238)</name>
    <name type="common">Vibrio salmonicida (strain LFI1238)</name>
    <dbReference type="NCBI Taxonomy" id="316275"/>
    <lineage>
        <taxon>Bacteria</taxon>
        <taxon>Pseudomonadati</taxon>
        <taxon>Pseudomonadota</taxon>
        <taxon>Gammaproteobacteria</taxon>
        <taxon>Vibrionales</taxon>
        <taxon>Vibrionaceae</taxon>
        <taxon>Aliivibrio</taxon>
    </lineage>
</organism>
<reference key="1">
    <citation type="journal article" date="2008" name="BMC Genomics">
        <title>The genome sequence of the fish pathogen Aliivibrio salmonicida strain LFI1238 shows extensive evidence of gene decay.</title>
        <authorList>
            <person name="Hjerde E."/>
            <person name="Lorentzen M.S."/>
            <person name="Holden M.T."/>
            <person name="Seeger K."/>
            <person name="Paulsen S."/>
            <person name="Bason N."/>
            <person name="Churcher C."/>
            <person name="Harris D."/>
            <person name="Norbertczak H."/>
            <person name="Quail M.A."/>
            <person name="Sanders S."/>
            <person name="Thurston S."/>
            <person name="Parkhill J."/>
            <person name="Willassen N.P."/>
            <person name="Thomson N.R."/>
        </authorList>
    </citation>
    <scope>NUCLEOTIDE SEQUENCE [LARGE SCALE GENOMIC DNA]</scope>
    <source>
        <strain>LFI1238</strain>
    </source>
</reference>
<evidence type="ECO:0000255" key="1">
    <source>
        <dbReference type="HAMAP-Rule" id="MF_01227"/>
    </source>
</evidence>